<name>GR33A_DROME</name>
<comment type="function">
    <text evidence="4 5">Gustatory receptor which mediates acceptance or avoidance behavior, depending on its substrates. Required for sensing all nonvolatile repulsive chemicals, including tastants, pheromones, and especially N,N-Diethyl-meta-toluamide (DEET), the most widely used insect repellent worldwide. Also functions as a pheromone receptor for a male inhibitory pheromone leading to male-male courtship suppression.</text>
</comment>
<comment type="subcellular location">
    <subcellularLocation>
        <location evidence="1">Cell membrane</location>
        <topology evidence="1">Multi-pass membrane protein</topology>
    </subcellularLocation>
</comment>
<comment type="tissue specificity">
    <text evidence="4 6">Expressed widely in gustatory receptor neurons (GRNs) that respond to aversive chemicals. In larvae, is expressed in neurons of the terminal external chemosensory organ, and the dorsal, ventral and posterior external chemosensory organs.</text>
</comment>
<comment type="disruption phenotype">
    <text evidence="4 5">Impairs avoiding all nonvolatile repellents tested, ranging from quinine to denatonium, lobeline, caffeine, and N,N-Diethyl-meta-toluamide (DEET). Also displays increased male-to-male courtship.</text>
</comment>
<comment type="similarity">
    <text evidence="7">Belongs to the insect chemoreceptor superfamily. Gustatory receptor (GR) family. Gr66a subfamily.</text>
</comment>
<reference key="1">
    <citation type="journal article" date="2000" name="Science">
        <title>The genome sequence of Drosophila melanogaster.</title>
        <authorList>
            <person name="Adams M.D."/>
            <person name="Celniker S.E."/>
            <person name="Holt R.A."/>
            <person name="Evans C.A."/>
            <person name="Gocayne J.D."/>
            <person name="Amanatides P.G."/>
            <person name="Scherer S.E."/>
            <person name="Li P.W."/>
            <person name="Hoskins R.A."/>
            <person name="Galle R.F."/>
            <person name="George R.A."/>
            <person name="Lewis S.E."/>
            <person name="Richards S."/>
            <person name="Ashburner M."/>
            <person name="Henderson S.N."/>
            <person name="Sutton G.G."/>
            <person name="Wortman J.R."/>
            <person name="Yandell M.D."/>
            <person name="Zhang Q."/>
            <person name="Chen L.X."/>
            <person name="Brandon R.C."/>
            <person name="Rogers Y.-H.C."/>
            <person name="Blazej R.G."/>
            <person name="Champe M."/>
            <person name="Pfeiffer B.D."/>
            <person name="Wan K.H."/>
            <person name="Doyle C."/>
            <person name="Baxter E.G."/>
            <person name="Helt G."/>
            <person name="Nelson C.R."/>
            <person name="Miklos G.L.G."/>
            <person name="Abril J.F."/>
            <person name="Agbayani A."/>
            <person name="An H.-J."/>
            <person name="Andrews-Pfannkoch C."/>
            <person name="Baldwin D."/>
            <person name="Ballew R.M."/>
            <person name="Basu A."/>
            <person name="Baxendale J."/>
            <person name="Bayraktaroglu L."/>
            <person name="Beasley E.M."/>
            <person name="Beeson K.Y."/>
            <person name="Benos P.V."/>
            <person name="Berman B.P."/>
            <person name="Bhandari D."/>
            <person name="Bolshakov S."/>
            <person name="Borkova D."/>
            <person name="Botchan M.R."/>
            <person name="Bouck J."/>
            <person name="Brokstein P."/>
            <person name="Brottier P."/>
            <person name="Burtis K.C."/>
            <person name="Busam D.A."/>
            <person name="Butler H."/>
            <person name="Cadieu E."/>
            <person name="Center A."/>
            <person name="Chandra I."/>
            <person name="Cherry J.M."/>
            <person name="Cawley S."/>
            <person name="Dahlke C."/>
            <person name="Davenport L.B."/>
            <person name="Davies P."/>
            <person name="de Pablos B."/>
            <person name="Delcher A."/>
            <person name="Deng Z."/>
            <person name="Mays A.D."/>
            <person name="Dew I."/>
            <person name="Dietz S.M."/>
            <person name="Dodson K."/>
            <person name="Doup L.E."/>
            <person name="Downes M."/>
            <person name="Dugan-Rocha S."/>
            <person name="Dunkov B.C."/>
            <person name="Dunn P."/>
            <person name="Durbin K.J."/>
            <person name="Evangelista C.C."/>
            <person name="Ferraz C."/>
            <person name="Ferriera S."/>
            <person name="Fleischmann W."/>
            <person name="Fosler C."/>
            <person name="Gabrielian A.E."/>
            <person name="Garg N.S."/>
            <person name="Gelbart W.M."/>
            <person name="Glasser K."/>
            <person name="Glodek A."/>
            <person name="Gong F."/>
            <person name="Gorrell J.H."/>
            <person name="Gu Z."/>
            <person name="Guan P."/>
            <person name="Harris M."/>
            <person name="Harris N.L."/>
            <person name="Harvey D.A."/>
            <person name="Heiman T.J."/>
            <person name="Hernandez J.R."/>
            <person name="Houck J."/>
            <person name="Hostin D."/>
            <person name="Houston K.A."/>
            <person name="Howland T.J."/>
            <person name="Wei M.-H."/>
            <person name="Ibegwam C."/>
            <person name="Jalali M."/>
            <person name="Kalush F."/>
            <person name="Karpen G.H."/>
            <person name="Ke Z."/>
            <person name="Kennison J.A."/>
            <person name="Ketchum K.A."/>
            <person name="Kimmel B.E."/>
            <person name="Kodira C.D."/>
            <person name="Kraft C.L."/>
            <person name="Kravitz S."/>
            <person name="Kulp D."/>
            <person name="Lai Z."/>
            <person name="Lasko P."/>
            <person name="Lei Y."/>
            <person name="Levitsky A.A."/>
            <person name="Li J.H."/>
            <person name="Li Z."/>
            <person name="Liang Y."/>
            <person name="Lin X."/>
            <person name="Liu X."/>
            <person name="Mattei B."/>
            <person name="McIntosh T.C."/>
            <person name="McLeod M.P."/>
            <person name="McPherson D."/>
            <person name="Merkulov G."/>
            <person name="Milshina N.V."/>
            <person name="Mobarry C."/>
            <person name="Morris J."/>
            <person name="Moshrefi A."/>
            <person name="Mount S.M."/>
            <person name="Moy M."/>
            <person name="Murphy B."/>
            <person name="Murphy L."/>
            <person name="Muzny D.M."/>
            <person name="Nelson D.L."/>
            <person name="Nelson D.R."/>
            <person name="Nelson K.A."/>
            <person name="Nixon K."/>
            <person name="Nusskern D.R."/>
            <person name="Pacleb J.M."/>
            <person name="Palazzolo M."/>
            <person name="Pittman G.S."/>
            <person name="Pan S."/>
            <person name="Pollard J."/>
            <person name="Puri V."/>
            <person name="Reese M.G."/>
            <person name="Reinert K."/>
            <person name="Remington K."/>
            <person name="Saunders R.D.C."/>
            <person name="Scheeler F."/>
            <person name="Shen H."/>
            <person name="Shue B.C."/>
            <person name="Siden-Kiamos I."/>
            <person name="Simpson M."/>
            <person name="Skupski M.P."/>
            <person name="Smith T.J."/>
            <person name="Spier E."/>
            <person name="Spradling A.C."/>
            <person name="Stapleton M."/>
            <person name="Strong R."/>
            <person name="Sun E."/>
            <person name="Svirskas R."/>
            <person name="Tector C."/>
            <person name="Turner R."/>
            <person name="Venter E."/>
            <person name="Wang A.H."/>
            <person name="Wang X."/>
            <person name="Wang Z.-Y."/>
            <person name="Wassarman D.A."/>
            <person name="Weinstock G.M."/>
            <person name="Weissenbach J."/>
            <person name="Williams S.M."/>
            <person name="Woodage T."/>
            <person name="Worley K.C."/>
            <person name="Wu D."/>
            <person name="Yang S."/>
            <person name="Yao Q.A."/>
            <person name="Ye J."/>
            <person name="Yeh R.-F."/>
            <person name="Zaveri J.S."/>
            <person name="Zhan M."/>
            <person name="Zhang G."/>
            <person name="Zhao Q."/>
            <person name="Zheng L."/>
            <person name="Zheng X.H."/>
            <person name="Zhong F.N."/>
            <person name="Zhong W."/>
            <person name="Zhou X."/>
            <person name="Zhu S.C."/>
            <person name="Zhu X."/>
            <person name="Smith H.O."/>
            <person name="Gibbs R.A."/>
            <person name="Myers E.W."/>
            <person name="Rubin G.M."/>
            <person name="Venter J.C."/>
        </authorList>
    </citation>
    <scope>NUCLEOTIDE SEQUENCE [LARGE SCALE GENOMIC DNA]</scope>
    <source>
        <strain>Berkeley</strain>
    </source>
</reference>
<reference key="2">
    <citation type="journal article" date="2002" name="Genome Biol.">
        <title>Annotation of the Drosophila melanogaster euchromatic genome: a systematic review.</title>
        <authorList>
            <person name="Misra S."/>
            <person name="Crosby M.A."/>
            <person name="Mungall C.J."/>
            <person name="Matthews B.B."/>
            <person name="Campbell K.S."/>
            <person name="Hradecky P."/>
            <person name="Huang Y."/>
            <person name="Kaminker J.S."/>
            <person name="Millburn G.H."/>
            <person name="Prochnik S.E."/>
            <person name="Smith C.D."/>
            <person name="Tupy J.L."/>
            <person name="Whitfield E.J."/>
            <person name="Bayraktaroglu L."/>
            <person name="Berman B.P."/>
            <person name="Bettencourt B.R."/>
            <person name="Celniker S.E."/>
            <person name="de Grey A.D.N.J."/>
            <person name="Drysdale R.A."/>
            <person name="Harris N.L."/>
            <person name="Richter J."/>
            <person name="Russo S."/>
            <person name="Schroeder A.J."/>
            <person name="Shu S.Q."/>
            <person name="Stapleton M."/>
            <person name="Yamada C."/>
            <person name="Ashburner M."/>
            <person name="Gelbart W.M."/>
            <person name="Rubin G.M."/>
            <person name="Lewis S.E."/>
        </authorList>
    </citation>
    <scope>GENOME REANNOTATION</scope>
    <source>
        <strain>Berkeley</strain>
    </source>
</reference>
<reference key="3">
    <citation type="journal article" date="2001" name="Curr. Biol.">
        <title>Spatially restricted expression of candidate taste receptors in the Drosophila gustatory system.</title>
        <authorList>
            <person name="Dunipace L."/>
            <person name="Meister S."/>
            <person name="McNealy C."/>
            <person name="Amrein H."/>
        </authorList>
    </citation>
    <scope>IDENTIFICATION</scope>
</reference>
<reference key="4">
    <citation type="journal article" date="2010" name="Neuron">
        <title>Avoiding DEET through insect gustatory receptors.</title>
        <authorList>
            <person name="Lee Y."/>
            <person name="Kim S.H."/>
            <person name="Montell C."/>
        </authorList>
    </citation>
    <scope>FUNCTION</scope>
    <scope>DISRUPTION PHENOTYPE</scope>
</reference>
<reference key="5">
    <citation type="journal article" date="2011" name="J. Neurosci.">
        <title>Molecular and cellular organization of the taste system in the Drosophila larva.</title>
        <authorList>
            <person name="Kwon J.Y."/>
            <person name="Dahanukar A."/>
            <person name="Weiss L.A."/>
            <person name="Carlson J.R."/>
        </authorList>
    </citation>
    <scope>TISSUE SPECIFICITY</scope>
</reference>
<reference key="6">
    <citation type="journal article" date="2009" name="Curr. Biol.">
        <title>A Drosophila gustatory receptor essential for aversive taste and inhibiting male-to-male courtship.</title>
        <authorList>
            <person name="Moon S.J."/>
            <person name="Lee Y."/>
            <person name="Jiao Y."/>
            <person name="Montell C."/>
        </authorList>
    </citation>
    <scope>TISSUE SPECIFICITY</scope>
    <scope>FUNCTION</scope>
    <scope>DISRUPTION PHENOTYPE</scope>
</reference>
<evidence type="ECO:0000250" key="1"/>
<evidence type="ECO:0000255" key="2"/>
<evidence type="ECO:0000256" key="3">
    <source>
        <dbReference type="SAM" id="MobiDB-lite"/>
    </source>
</evidence>
<evidence type="ECO:0000269" key="4">
    <source>
    </source>
</evidence>
<evidence type="ECO:0000269" key="5">
    <source>
    </source>
</evidence>
<evidence type="ECO:0000269" key="6">
    <source>
    </source>
</evidence>
<evidence type="ECO:0000305" key="7"/>
<gene>
    <name type="primary">Gr33a</name>
    <name type="ORF">CG17213</name>
</gene>
<accession>Q9VKA5</accession>
<feature type="chain" id="PRO_0000216504" description="Gustatory and pheromone receptor 33a">
    <location>
        <begin position="1"/>
        <end position="475"/>
    </location>
</feature>
<feature type="topological domain" description="Cytoplasmic" evidence="1">
    <location>
        <begin position="1"/>
        <end position="34"/>
    </location>
</feature>
<feature type="transmembrane region" description="Helical; Name=1" evidence="2">
    <location>
        <begin position="35"/>
        <end position="55"/>
    </location>
</feature>
<feature type="topological domain" description="Extracellular" evidence="1">
    <location>
        <begin position="56"/>
        <end position="68"/>
    </location>
</feature>
<feature type="transmembrane region" description="Helical; Name=2" evidence="2">
    <location>
        <begin position="69"/>
        <end position="89"/>
    </location>
</feature>
<feature type="topological domain" description="Cytoplasmic" evidence="1">
    <location>
        <begin position="90"/>
        <end position="128"/>
    </location>
</feature>
<feature type="transmembrane region" description="Helical; Name=3" evidence="2">
    <location>
        <begin position="129"/>
        <end position="149"/>
    </location>
</feature>
<feature type="topological domain" description="Extracellular" evidence="1">
    <location>
        <begin position="150"/>
        <end position="158"/>
    </location>
</feature>
<feature type="transmembrane region" description="Helical; Name=4" evidence="2">
    <location>
        <begin position="159"/>
        <end position="179"/>
    </location>
</feature>
<feature type="topological domain" description="Cytoplasmic" evidence="1">
    <location>
        <begin position="180"/>
        <end position="319"/>
    </location>
</feature>
<feature type="transmembrane region" description="Helical; Name=5" evidence="2">
    <location>
        <begin position="320"/>
        <end position="340"/>
    </location>
</feature>
<feature type="topological domain" description="Extracellular" evidence="1">
    <location>
        <begin position="341"/>
        <end position="357"/>
    </location>
</feature>
<feature type="transmembrane region" description="Helical; Name=6" evidence="2">
    <location>
        <begin position="358"/>
        <end position="378"/>
    </location>
</feature>
<feature type="topological domain" description="Cytoplasmic" evidence="1">
    <location>
        <begin position="379"/>
        <end position="441"/>
    </location>
</feature>
<feature type="transmembrane region" description="Helical; Name=7" evidence="2">
    <location>
        <begin position="442"/>
        <end position="462"/>
    </location>
</feature>
<feature type="topological domain" description="Extracellular" evidence="1">
    <location>
        <begin position="463"/>
        <end position="475"/>
    </location>
</feature>
<feature type="region of interest" description="Disordered" evidence="3">
    <location>
        <begin position="243"/>
        <end position="281"/>
    </location>
</feature>
<feature type="compositionally biased region" description="Basic and acidic residues" evidence="3">
    <location>
        <begin position="251"/>
        <end position="264"/>
    </location>
</feature>
<feature type="compositionally biased region" description="Acidic residues" evidence="3">
    <location>
        <begin position="265"/>
        <end position="281"/>
    </location>
</feature>
<protein>
    <recommendedName>
        <fullName>Gustatory and pheromone receptor 33a</fullName>
    </recommendedName>
</protein>
<keyword id="KW-1003">Cell membrane</keyword>
<keyword id="KW-0472">Membrane</keyword>
<keyword id="KW-0675">Receptor</keyword>
<keyword id="KW-1185">Reference proteome</keyword>
<keyword id="KW-0807">Transducer</keyword>
<keyword id="KW-0812">Transmembrane</keyword>
<keyword id="KW-1133">Transmembrane helix</keyword>
<proteinExistence type="evidence at transcript level"/>
<sequence>MIQIMNWFSMVIGLIPLNRQQSETNFILDYAMMCIVPIFYVACYLLINLSHIIGLCLLDSCNSVCKLSSHLFMHLGAFLYLTITLLSLYRRKEFFQQFDARLNDIDAVIQKCQRVAEMDKVKVTAVKHSVAYHFTWLFLFCVFTFALYYDVRSLYLTFGNLAFIPFMVSSFPYLAGSIIQGEFIYHVSVISQRFEQINMLLEKINQEARHRHAPLTVFDIESEGKKERKTVTPITVMDGRTTTGFGNENKFAGEMKRQEGQQKNDDDDLDTSNDEDEDDFDYDNATIAENTGNTSEANLPDLFKLHDKILALSVITNGEFGPQCVPYMAACFVVSIFGIFLETKVNFIVGGKSRLLDYMTYLYVIWSFTTMMVAYIVLRLCCNANNHSKQSAMIVHEIMQKKPAFMLSNDLFYNKMKSFTLQFLHWEGFFQFNGVGLFALDYTFIFSTVSAATSYLIVLLQFDMTAILRNEGLMS</sequence>
<dbReference type="EMBL" id="AE014134">
    <property type="protein sequence ID" value="AAF53173.4"/>
    <property type="molecule type" value="Genomic_DNA"/>
</dbReference>
<dbReference type="RefSeq" id="NP_525102.4">
    <property type="nucleotide sequence ID" value="NM_080363.8"/>
</dbReference>
<dbReference type="FunCoup" id="Q9VKA5">
    <property type="interactions" value="16"/>
</dbReference>
<dbReference type="STRING" id="7227.FBpp0079919"/>
<dbReference type="PaxDb" id="7227-FBpp0079919"/>
<dbReference type="EnsemblMetazoa" id="FBtr0080337">
    <property type="protein sequence ID" value="FBpp0079919"/>
    <property type="gene ID" value="FBgn0032416"/>
</dbReference>
<dbReference type="GeneID" id="34641"/>
<dbReference type="KEGG" id="dme:Dmel_CG17213"/>
<dbReference type="AGR" id="FB:FBgn0032416"/>
<dbReference type="CTD" id="34641"/>
<dbReference type="FlyBase" id="FBgn0032416">
    <property type="gene designation" value="Gr33a"/>
</dbReference>
<dbReference type="VEuPathDB" id="VectorBase:FBgn0032416"/>
<dbReference type="eggNOG" id="ENOG502TBCF">
    <property type="taxonomic scope" value="Eukaryota"/>
</dbReference>
<dbReference type="HOGENOM" id="CLU_573997_0_0_1"/>
<dbReference type="InParanoid" id="Q9VKA5"/>
<dbReference type="OMA" id="YRRKEFF"/>
<dbReference type="OrthoDB" id="7789982at2759"/>
<dbReference type="PhylomeDB" id="Q9VKA5"/>
<dbReference type="BioGRID-ORCS" id="34641">
    <property type="hits" value="0 hits in 1 CRISPR screen"/>
</dbReference>
<dbReference type="GenomeRNAi" id="34641"/>
<dbReference type="PRO" id="PR:Q9VKA5"/>
<dbReference type="Proteomes" id="UP000000803">
    <property type="component" value="Chromosome 2L"/>
</dbReference>
<dbReference type="Bgee" id="FBgn0032416">
    <property type="expression patterns" value="Expressed in gustatory receptor neuron (Drosophila) and 1 other cell type or tissue"/>
</dbReference>
<dbReference type="ExpressionAtlas" id="Q9VKA5">
    <property type="expression patterns" value="baseline and differential"/>
</dbReference>
<dbReference type="GO" id="GO:0030424">
    <property type="term" value="C:axon"/>
    <property type="evidence" value="ECO:0000314"/>
    <property type="project" value="FlyBase"/>
</dbReference>
<dbReference type="GO" id="GO:0044297">
    <property type="term" value="C:cell body"/>
    <property type="evidence" value="ECO:0000314"/>
    <property type="project" value="FlyBase"/>
</dbReference>
<dbReference type="GO" id="GO:0030425">
    <property type="term" value="C:dendrite"/>
    <property type="evidence" value="ECO:0000314"/>
    <property type="project" value="FlyBase"/>
</dbReference>
<dbReference type="GO" id="GO:0016020">
    <property type="term" value="C:membrane"/>
    <property type="evidence" value="ECO:0000303"/>
    <property type="project" value="UniProtKB"/>
</dbReference>
<dbReference type="GO" id="GO:0043025">
    <property type="term" value="C:neuronal cell body"/>
    <property type="evidence" value="ECO:0000318"/>
    <property type="project" value="GO_Central"/>
</dbReference>
<dbReference type="GO" id="GO:0005886">
    <property type="term" value="C:plasma membrane"/>
    <property type="evidence" value="ECO:0000250"/>
    <property type="project" value="FlyBase"/>
</dbReference>
<dbReference type="GO" id="GO:0170021">
    <property type="term" value="F:ionotropic taste receptor activity"/>
    <property type="evidence" value="ECO:0000315"/>
    <property type="project" value="FlyBase"/>
</dbReference>
<dbReference type="GO" id="GO:0015276">
    <property type="term" value="F:ligand-gated monoatomic ion channel activity"/>
    <property type="evidence" value="ECO:0000250"/>
    <property type="project" value="FlyBase"/>
</dbReference>
<dbReference type="GO" id="GO:0008527">
    <property type="term" value="F:taste receptor activity"/>
    <property type="evidence" value="ECO:0000303"/>
    <property type="project" value="UniProtKB"/>
</dbReference>
<dbReference type="GO" id="GO:0007635">
    <property type="term" value="P:chemosensory behavior"/>
    <property type="evidence" value="ECO:0000318"/>
    <property type="project" value="GO_Central"/>
</dbReference>
<dbReference type="GO" id="GO:0001580">
    <property type="term" value="P:detection of chemical stimulus involved in sensory perception of bitter taste"/>
    <property type="evidence" value="ECO:0000315"/>
    <property type="project" value="FlyBase"/>
</dbReference>
<dbReference type="GO" id="GO:0008049">
    <property type="term" value="P:male courtship behavior"/>
    <property type="evidence" value="ECO:0000315"/>
    <property type="project" value="FlyBase"/>
</dbReference>
<dbReference type="GO" id="GO:0060179">
    <property type="term" value="P:male mating behavior"/>
    <property type="evidence" value="ECO:0000315"/>
    <property type="project" value="FlyBase"/>
</dbReference>
<dbReference type="GO" id="GO:0034220">
    <property type="term" value="P:monoatomic ion transmembrane transport"/>
    <property type="evidence" value="ECO:0000250"/>
    <property type="project" value="FlyBase"/>
</dbReference>
<dbReference type="GO" id="GO:0009636">
    <property type="term" value="P:response to toxic substance"/>
    <property type="evidence" value="ECO:0000315"/>
    <property type="project" value="FlyBase"/>
</dbReference>
<dbReference type="GO" id="GO:0050913">
    <property type="term" value="P:sensory perception of bitter taste"/>
    <property type="evidence" value="ECO:0000315"/>
    <property type="project" value="FlyBase"/>
</dbReference>
<dbReference type="GO" id="GO:0050909">
    <property type="term" value="P:sensory perception of taste"/>
    <property type="evidence" value="ECO:0000315"/>
    <property type="project" value="FlyBase"/>
</dbReference>
<dbReference type="GO" id="GO:0007165">
    <property type="term" value="P:signal transduction"/>
    <property type="evidence" value="ECO:0007669"/>
    <property type="project" value="UniProtKB-KW"/>
</dbReference>
<dbReference type="InterPro" id="IPR013604">
    <property type="entry name" value="7TM_chemorcpt"/>
</dbReference>
<dbReference type="PANTHER" id="PTHR21143:SF132">
    <property type="entry name" value="GUSTATORY AND PHEROMONE RECEPTOR 33A"/>
    <property type="match status" value="1"/>
</dbReference>
<dbReference type="PANTHER" id="PTHR21143">
    <property type="entry name" value="INVERTEBRATE GUSTATORY RECEPTOR"/>
    <property type="match status" value="1"/>
</dbReference>
<dbReference type="Pfam" id="PF08395">
    <property type="entry name" value="7tm_7"/>
    <property type="match status" value="1"/>
</dbReference>
<organism>
    <name type="scientific">Drosophila melanogaster</name>
    <name type="common">Fruit fly</name>
    <dbReference type="NCBI Taxonomy" id="7227"/>
    <lineage>
        <taxon>Eukaryota</taxon>
        <taxon>Metazoa</taxon>
        <taxon>Ecdysozoa</taxon>
        <taxon>Arthropoda</taxon>
        <taxon>Hexapoda</taxon>
        <taxon>Insecta</taxon>
        <taxon>Pterygota</taxon>
        <taxon>Neoptera</taxon>
        <taxon>Endopterygota</taxon>
        <taxon>Diptera</taxon>
        <taxon>Brachycera</taxon>
        <taxon>Muscomorpha</taxon>
        <taxon>Ephydroidea</taxon>
        <taxon>Drosophilidae</taxon>
        <taxon>Drosophila</taxon>
        <taxon>Sophophora</taxon>
    </lineage>
</organism>